<accession>O04378</accession>
<accession>O23613</accession>
<protein>
    <recommendedName>
        <fullName>Syntaxin-23</fullName>
        <shortName>AtPLP</shortName>
        <shortName>AtSYP23</shortName>
    </recommendedName>
    <alternativeName>
        <fullName>AtPEP12-like protein</fullName>
    </alternativeName>
</protein>
<comment type="function">
    <text>May function in the docking or fusion of transport vesicles with the prevacuolar membrane.</text>
</comment>
<comment type="subunit">
    <text evidence="1 5">Part of the t-SNARE complex (By similarity). Interacts with RGS1.</text>
</comment>
<comment type="subcellular location">
    <subcellularLocation>
        <location>Membrane</location>
        <topology>Single-pass type IV membrane protein</topology>
    </subcellularLocation>
    <subcellularLocation>
        <location>Membrane</location>
    </subcellularLocation>
    <text>In cv. RLD, probably a type IV membrane protein. In cv. Columbia, probably associated with membranes by a post-translational modification or through protein-protein interactions.</text>
</comment>
<comment type="alternative products">
    <event type="alternative splicing"/>
    <isoform>
        <id>O04378-1</id>
        <name>1</name>
        <sequence type="displayed"/>
    </isoform>
    <text>A number of isoforms are produced. According to EST sequences.</text>
</comment>
<comment type="tissue specificity">
    <text>Expressed at higher levels in leaves, flowers and stems than in roots.</text>
</comment>
<comment type="polymorphism">
    <text evidence="6">Addition of one nucleotide in cv. RLD induces a frameshift in position 245 leading to a protein 22 amino acids longer than the one shown here.</text>
</comment>
<comment type="miscellaneous">
    <text>In cv. RLD, the 22 amino acids extension regenerates a typical syntaxin transmembrane domain. In cv. Columbia it encodes a protein that has no terminal transmembrane domain, but that is however not detected in cytosolic fractions.</text>
</comment>
<comment type="similarity">
    <text evidence="7">Belongs to the syntaxin family.</text>
</comment>
<dbReference type="EMBL" id="U85036">
    <property type="protein sequence ID" value="AAB58544.1"/>
    <property type="molecule type" value="mRNA"/>
</dbReference>
<dbReference type="EMBL" id="Z97344">
    <property type="protein sequence ID" value="CAB10553.2"/>
    <property type="molecule type" value="Genomic_DNA"/>
</dbReference>
<dbReference type="EMBL" id="AL161547">
    <property type="protein sequence ID" value="CAB78776.1"/>
    <property type="molecule type" value="Genomic_DNA"/>
</dbReference>
<dbReference type="EMBL" id="CP002687">
    <property type="protein sequence ID" value="AEE83941.1"/>
    <property type="molecule type" value="Genomic_DNA"/>
</dbReference>
<dbReference type="EMBL" id="AY074294">
    <property type="protein sequence ID" value="AAL66991.1"/>
    <property type="molecule type" value="mRNA"/>
</dbReference>
<dbReference type="EMBL" id="BT000708">
    <property type="protein sequence ID" value="AAN31851.1"/>
    <property type="molecule type" value="mRNA"/>
</dbReference>
<dbReference type="EMBL" id="BT008517">
    <property type="protein sequence ID" value="AAP40344.1"/>
    <property type="molecule type" value="mRNA"/>
</dbReference>
<dbReference type="PIR" id="H85198">
    <property type="entry name" value="H85198"/>
</dbReference>
<dbReference type="RefSeq" id="NP_567537.1">
    <molecule id="O04378-1"/>
    <property type="nucleotide sequence ID" value="NM_117882.3"/>
</dbReference>
<dbReference type="SMR" id="O04378"/>
<dbReference type="BioGRID" id="12787">
    <property type="interactions" value="56"/>
</dbReference>
<dbReference type="FunCoup" id="O04378">
    <property type="interactions" value="3005"/>
</dbReference>
<dbReference type="STRING" id="3702.O04378"/>
<dbReference type="PaxDb" id="3702-AT4G17730.2"/>
<dbReference type="ProteomicsDB" id="233054">
    <molecule id="O04378-1"/>
</dbReference>
<dbReference type="EnsemblPlants" id="AT4G17730.1">
    <molecule id="O04378-1"/>
    <property type="protein sequence ID" value="AT4G17730.1"/>
    <property type="gene ID" value="AT4G17730"/>
</dbReference>
<dbReference type="GeneID" id="827494"/>
<dbReference type="Gramene" id="AT4G17730.1">
    <molecule id="O04378-1"/>
    <property type="protein sequence ID" value="AT4G17730.1"/>
    <property type="gene ID" value="AT4G17730"/>
</dbReference>
<dbReference type="KEGG" id="ath:AT4G17730"/>
<dbReference type="Araport" id="AT4G17730"/>
<dbReference type="TAIR" id="AT4G17730">
    <property type="gene designation" value="SYP23"/>
</dbReference>
<dbReference type="eggNOG" id="KOG0811">
    <property type="taxonomic scope" value="Eukaryota"/>
</dbReference>
<dbReference type="HOGENOM" id="CLU_059257_3_0_1"/>
<dbReference type="InParanoid" id="O04378"/>
<dbReference type="OMA" id="AGIIVWK"/>
<dbReference type="PhylomeDB" id="O04378"/>
<dbReference type="PRO" id="PR:O04378"/>
<dbReference type="Proteomes" id="UP000006548">
    <property type="component" value="Chromosome 4"/>
</dbReference>
<dbReference type="ExpressionAtlas" id="O04378">
    <property type="expression patterns" value="baseline and differential"/>
</dbReference>
<dbReference type="GO" id="GO:0016020">
    <property type="term" value="C:membrane"/>
    <property type="evidence" value="ECO:0007669"/>
    <property type="project" value="UniProtKB-SubCell"/>
</dbReference>
<dbReference type="GO" id="GO:0005484">
    <property type="term" value="F:SNAP receptor activity"/>
    <property type="evidence" value="ECO:0007669"/>
    <property type="project" value="InterPro"/>
</dbReference>
<dbReference type="GO" id="GO:0006886">
    <property type="term" value="P:intracellular protein transport"/>
    <property type="evidence" value="ECO:0007669"/>
    <property type="project" value="InterPro"/>
</dbReference>
<dbReference type="GO" id="GO:0016192">
    <property type="term" value="P:vesicle-mediated transport"/>
    <property type="evidence" value="ECO:0007669"/>
    <property type="project" value="InterPro"/>
</dbReference>
<dbReference type="CDD" id="cd15840">
    <property type="entry name" value="SNARE_Qa"/>
    <property type="match status" value="1"/>
</dbReference>
<dbReference type="CDD" id="cd00179">
    <property type="entry name" value="SynN"/>
    <property type="match status" value="1"/>
</dbReference>
<dbReference type="FunFam" id="1.20.5.110:FF:000189">
    <property type="entry name" value="AT4G17730 protein"/>
    <property type="match status" value="1"/>
</dbReference>
<dbReference type="FunFam" id="1.20.58.70:FF:000004">
    <property type="entry name" value="Syntaxin-22 like"/>
    <property type="match status" value="1"/>
</dbReference>
<dbReference type="Gene3D" id="1.20.5.110">
    <property type="match status" value="1"/>
</dbReference>
<dbReference type="Gene3D" id="1.20.58.70">
    <property type="match status" value="1"/>
</dbReference>
<dbReference type="InterPro" id="IPR010989">
    <property type="entry name" value="SNARE"/>
</dbReference>
<dbReference type="InterPro" id="IPR045242">
    <property type="entry name" value="Syntaxin"/>
</dbReference>
<dbReference type="InterPro" id="IPR006012">
    <property type="entry name" value="Syntaxin/epimorphin_CS"/>
</dbReference>
<dbReference type="InterPro" id="IPR006011">
    <property type="entry name" value="Syntaxin_N"/>
</dbReference>
<dbReference type="InterPro" id="IPR000727">
    <property type="entry name" value="T_SNARE_dom"/>
</dbReference>
<dbReference type="PANTHER" id="PTHR19957">
    <property type="entry name" value="SYNTAXIN"/>
    <property type="match status" value="1"/>
</dbReference>
<dbReference type="PANTHER" id="PTHR19957:SF398">
    <property type="entry name" value="SYNTAXIN-23"/>
    <property type="match status" value="1"/>
</dbReference>
<dbReference type="Pfam" id="PF14523">
    <property type="entry name" value="Syntaxin_2"/>
    <property type="match status" value="1"/>
</dbReference>
<dbReference type="SMART" id="SM00503">
    <property type="entry name" value="SynN"/>
    <property type="match status" value="1"/>
</dbReference>
<dbReference type="SMART" id="SM00397">
    <property type="entry name" value="t_SNARE"/>
    <property type="match status" value="1"/>
</dbReference>
<dbReference type="SUPFAM" id="SSF47661">
    <property type="entry name" value="t-snare proteins"/>
    <property type="match status" value="1"/>
</dbReference>
<dbReference type="PROSITE" id="PS00914">
    <property type="entry name" value="SYNTAXIN"/>
    <property type="match status" value="1"/>
</dbReference>
<dbReference type="PROSITE" id="PS50192">
    <property type="entry name" value="T_SNARE"/>
    <property type="match status" value="1"/>
</dbReference>
<keyword id="KW-0007">Acetylation</keyword>
<keyword id="KW-0025">Alternative splicing</keyword>
<keyword id="KW-0175">Coiled coil</keyword>
<keyword id="KW-0472">Membrane</keyword>
<keyword id="KW-0653">Protein transport</keyword>
<keyword id="KW-1185">Reference proteome</keyword>
<keyword id="KW-0812">Transmembrane</keyword>
<keyword id="KW-0813">Transport</keyword>
<gene>
    <name type="primary">SYP23</name>
    <name type="ordered locus">At4g17730</name>
    <name type="ORF">dl4901w</name>
    <name type="ORF">FCAALL.117</name>
</gene>
<evidence type="ECO:0000250" key="1"/>
<evidence type="ECO:0000250" key="2">
    <source>
        <dbReference type="UniProtKB" id="P93654"/>
    </source>
</evidence>
<evidence type="ECO:0000255" key="3">
    <source>
        <dbReference type="PROSITE-ProRule" id="PRU00202"/>
    </source>
</evidence>
<evidence type="ECO:0000256" key="4">
    <source>
        <dbReference type="SAM" id="MobiDB-lite"/>
    </source>
</evidence>
<evidence type="ECO:0000269" key="5">
    <source>
    </source>
</evidence>
<evidence type="ECO:0000269" key="6">
    <source ref="1"/>
</evidence>
<evidence type="ECO:0000305" key="7"/>
<proteinExistence type="evidence at protein level"/>
<organism>
    <name type="scientific">Arabidopsis thaliana</name>
    <name type="common">Mouse-ear cress</name>
    <dbReference type="NCBI Taxonomy" id="3702"/>
    <lineage>
        <taxon>Eukaryota</taxon>
        <taxon>Viridiplantae</taxon>
        <taxon>Streptophyta</taxon>
        <taxon>Embryophyta</taxon>
        <taxon>Tracheophyta</taxon>
        <taxon>Spermatophyta</taxon>
        <taxon>Magnoliopsida</taxon>
        <taxon>eudicotyledons</taxon>
        <taxon>Gunneridae</taxon>
        <taxon>Pentapetalae</taxon>
        <taxon>rosids</taxon>
        <taxon>malvids</taxon>
        <taxon>Brassicales</taxon>
        <taxon>Brassicaceae</taxon>
        <taxon>Camelineae</taxon>
        <taxon>Arabidopsis</taxon>
    </lineage>
</organism>
<reference key="1">
    <citation type="journal article" date="1999" name="J. Exp. Bot.">
        <title>The syntaxin family of proteins in Arabidopsis: a new syntaxin homologue shows polymorphism between two ecotypes.</title>
        <authorList>
            <person name="Zheng H."/>
            <person name="Bassham D.C."/>
            <person name="da Silva Conceicao A."/>
            <person name="Raikhel N.V."/>
        </authorList>
    </citation>
    <scope>NUCLEOTIDE SEQUENCE [MRNA]</scope>
    <scope>POLYMORPHISM</scope>
    <source>
        <strain>cv. Columbia</strain>
        <strain>cv. RLD</strain>
    </source>
</reference>
<reference key="2">
    <citation type="journal article" date="1998" name="Nature">
        <title>Analysis of 1.9 Mb of contiguous sequence from chromosome 4 of Arabidopsis thaliana.</title>
        <authorList>
            <person name="Bevan M."/>
            <person name="Bancroft I."/>
            <person name="Bent E."/>
            <person name="Love K."/>
            <person name="Goodman H.M."/>
            <person name="Dean C."/>
            <person name="Bergkamp R."/>
            <person name="Dirkse W."/>
            <person name="van Staveren M."/>
            <person name="Stiekema W."/>
            <person name="Drost L."/>
            <person name="Ridley P."/>
            <person name="Hudson S.-A."/>
            <person name="Patel K."/>
            <person name="Murphy G."/>
            <person name="Piffanelli P."/>
            <person name="Wedler H."/>
            <person name="Wedler E."/>
            <person name="Wambutt R."/>
            <person name="Weitzenegger T."/>
            <person name="Pohl T."/>
            <person name="Terryn N."/>
            <person name="Gielen J."/>
            <person name="Villarroel R."/>
            <person name="De Clercq R."/>
            <person name="van Montagu M."/>
            <person name="Lecharny A."/>
            <person name="Aubourg S."/>
            <person name="Gy I."/>
            <person name="Kreis M."/>
            <person name="Lao N."/>
            <person name="Kavanagh T."/>
            <person name="Hempel S."/>
            <person name="Kotter P."/>
            <person name="Entian K.-D."/>
            <person name="Rieger M."/>
            <person name="Schaefer M."/>
            <person name="Funk B."/>
            <person name="Mueller-Auer S."/>
            <person name="Silvey M."/>
            <person name="James R."/>
            <person name="Monfort A."/>
            <person name="Pons A."/>
            <person name="Puigdomenech P."/>
            <person name="Douka A."/>
            <person name="Voukelatou E."/>
            <person name="Milioni D."/>
            <person name="Hatzopoulos P."/>
            <person name="Piravandi E."/>
            <person name="Obermaier B."/>
            <person name="Hilbert H."/>
            <person name="Duesterhoeft A."/>
            <person name="Moores T."/>
            <person name="Jones J.D.G."/>
            <person name="Eneva T."/>
            <person name="Palme K."/>
            <person name="Benes V."/>
            <person name="Rechmann S."/>
            <person name="Ansorge W."/>
            <person name="Cooke R."/>
            <person name="Berger C."/>
            <person name="Delseny M."/>
            <person name="Voet M."/>
            <person name="Volckaert G."/>
            <person name="Mewes H.-W."/>
            <person name="Klosterman S."/>
            <person name="Schueller C."/>
            <person name="Chalwatzis N."/>
        </authorList>
    </citation>
    <scope>NUCLEOTIDE SEQUENCE [LARGE SCALE GENOMIC DNA]</scope>
    <source>
        <strain>cv. Columbia</strain>
    </source>
</reference>
<reference key="3">
    <citation type="journal article" date="1999" name="Nature">
        <title>Sequence and analysis of chromosome 4 of the plant Arabidopsis thaliana.</title>
        <authorList>
            <person name="Mayer K.F.X."/>
            <person name="Schueller C."/>
            <person name="Wambutt R."/>
            <person name="Murphy G."/>
            <person name="Volckaert G."/>
            <person name="Pohl T."/>
            <person name="Duesterhoeft A."/>
            <person name="Stiekema W."/>
            <person name="Entian K.-D."/>
            <person name="Terryn N."/>
            <person name="Harris B."/>
            <person name="Ansorge W."/>
            <person name="Brandt P."/>
            <person name="Grivell L.A."/>
            <person name="Rieger M."/>
            <person name="Weichselgartner M."/>
            <person name="de Simone V."/>
            <person name="Obermaier B."/>
            <person name="Mache R."/>
            <person name="Mueller M."/>
            <person name="Kreis M."/>
            <person name="Delseny M."/>
            <person name="Puigdomenech P."/>
            <person name="Watson M."/>
            <person name="Schmidtheini T."/>
            <person name="Reichert B."/>
            <person name="Portetelle D."/>
            <person name="Perez-Alonso M."/>
            <person name="Boutry M."/>
            <person name="Bancroft I."/>
            <person name="Vos P."/>
            <person name="Hoheisel J."/>
            <person name="Zimmermann W."/>
            <person name="Wedler H."/>
            <person name="Ridley P."/>
            <person name="Langham S.-A."/>
            <person name="McCullagh B."/>
            <person name="Bilham L."/>
            <person name="Robben J."/>
            <person name="van der Schueren J."/>
            <person name="Grymonprez B."/>
            <person name="Chuang Y.-J."/>
            <person name="Vandenbussche F."/>
            <person name="Braeken M."/>
            <person name="Weltjens I."/>
            <person name="Voet M."/>
            <person name="Bastiaens I."/>
            <person name="Aert R."/>
            <person name="Defoor E."/>
            <person name="Weitzenegger T."/>
            <person name="Bothe G."/>
            <person name="Ramsperger U."/>
            <person name="Hilbert H."/>
            <person name="Braun M."/>
            <person name="Holzer E."/>
            <person name="Brandt A."/>
            <person name="Peters S."/>
            <person name="van Staveren M."/>
            <person name="Dirkse W."/>
            <person name="Mooijman P."/>
            <person name="Klein Lankhorst R."/>
            <person name="Rose M."/>
            <person name="Hauf J."/>
            <person name="Koetter P."/>
            <person name="Berneiser S."/>
            <person name="Hempel S."/>
            <person name="Feldpausch M."/>
            <person name="Lamberth S."/>
            <person name="Van den Daele H."/>
            <person name="De Keyser A."/>
            <person name="Buysshaert C."/>
            <person name="Gielen J."/>
            <person name="Villarroel R."/>
            <person name="De Clercq R."/>
            <person name="van Montagu M."/>
            <person name="Rogers J."/>
            <person name="Cronin A."/>
            <person name="Quail M.A."/>
            <person name="Bray-Allen S."/>
            <person name="Clark L."/>
            <person name="Doggett J."/>
            <person name="Hall S."/>
            <person name="Kay M."/>
            <person name="Lennard N."/>
            <person name="McLay K."/>
            <person name="Mayes R."/>
            <person name="Pettett A."/>
            <person name="Rajandream M.A."/>
            <person name="Lyne M."/>
            <person name="Benes V."/>
            <person name="Rechmann S."/>
            <person name="Borkova D."/>
            <person name="Bloecker H."/>
            <person name="Scharfe M."/>
            <person name="Grimm M."/>
            <person name="Loehnert T.-H."/>
            <person name="Dose S."/>
            <person name="de Haan M."/>
            <person name="Maarse A.C."/>
            <person name="Schaefer M."/>
            <person name="Mueller-Auer S."/>
            <person name="Gabel C."/>
            <person name="Fuchs M."/>
            <person name="Fartmann B."/>
            <person name="Granderath K."/>
            <person name="Dauner D."/>
            <person name="Herzl A."/>
            <person name="Neumann S."/>
            <person name="Argiriou A."/>
            <person name="Vitale D."/>
            <person name="Liguori R."/>
            <person name="Piravandi E."/>
            <person name="Massenet O."/>
            <person name="Quigley F."/>
            <person name="Clabauld G."/>
            <person name="Muendlein A."/>
            <person name="Felber R."/>
            <person name="Schnabl S."/>
            <person name="Hiller R."/>
            <person name="Schmidt W."/>
            <person name="Lecharny A."/>
            <person name="Aubourg S."/>
            <person name="Chefdor F."/>
            <person name="Cooke R."/>
            <person name="Berger C."/>
            <person name="Monfort A."/>
            <person name="Casacuberta E."/>
            <person name="Gibbons T."/>
            <person name="Weber N."/>
            <person name="Vandenbol M."/>
            <person name="Bargues M."/>
            <person name="Terol J."/>
            <person name="Torres A."/>
            <person name="Perez-Perez A."/>
            <person name="Purnelle B."/>
            <person name="Bent E."/>
            <person name="Johnson S."/>
            <person name="Tacon D."/>
            <person name="Jesse T."/>
            <person name="Heijnen L."/>
            <person name="Schwarz S."/>
            <person name="Scholler P."/>
            <person name="Heber S."/>
            <person name="Francs P."/>
            <person name="Bielke C."/>
            <person name="Frishman D."/>
            <person name="Haase D."/>
            <person name="Lemcke K."/>
            <person name="Mewes H.-W."/>
            <person name="Stocker S."/>
            <person name="Zaccaria P."/>
            <person name="Bevan M."/>
            <person name="Wilson R.K."/>
            <person name="de la Bastide M."/>
            <person name="Habermann K."/>
            <person name="Parnell L."/>
            <person name="Dedhia N."/>
            <person name="Gnoj L."/>
            <person name="Schutz K."/>
            <person name="Huang E."/>
            <person name="Spiegel L."/>
            <person name="Sekhon M."/>
            <person name="Murray J."/>
            <person name="Sheet P."/>
            <person name="Cordes M."/>
            <person name="Abu-Threideh J."/>
            <person name="Stoneking T."/>
            <person name="Kalicki J."/>
            <person name="Graves T."/>
            <person name="Harmon G."/>
            <person name="Edwards J."/>
            <person name="Latreille P."/>
            <person name="Courtney L."/>
            <person name="Cloud J."/>
            <person name="Abbott A."/>
            <person name="Scott K."/>
            <person name="Johnson D."/>
            <person name="Minx P."/>
            <person name="Bentley D."/>
            <person name="Fulton B."/>
            <person name="Miller N."/>
            <person name="Greco T."/>
            <person name="Kemp K."/>
            <person name="Kramer J."/>
            <person name="Fulton L."/>
            <person name="Mardis E."/>
            <person name="Dante M."/>
            <person name="Pepin K."/>
            <person name="Hillier L.W."/>
            <person name="Nelson J."/>
            <person name="Spieth J."/>
            <person name="Ryan E."/>
            <person name="Andrews S."/>
            <person name="Geisel C."/>
            <person name="Layman D."/>
            <person name="Du H."/>
            <person name="Ali J."/>
            <person name="Berghoff A."/>
            <person name="Jones K."/>
            <person name="Drone K."/>
            <person name="Cotton M."/>
            <person name="Joshu C."/>
            <person name="Antonoiu B."/>
            <person name="Zidanic M."/>
            <person name="Strong C."/>
            <person name="Sun H."/>
            <person name="Lamar B."/>
            <person name="Yordan C."/>
            <person name="Ma P."/>
            <person name="Zhong J."/>
            <person name="Preston R."/>
            <person name="Vil D."/>
            <person name="Shekher M."/>
            <person name="Matero A."/>
            <person name="Shah R."/>
            <person name="Swaby I.K."/>
            <person name="O'Shaughnessy A."/>
            <person name="Rodriguez M."/>
            <person name="Hoffman J."/>
            <person name="Till S."/>
            <person name="Granat S."/>
            <person name="Shohdy N."/>
            <person name="Hasegawa A."/>
            <person name="Hameed A."/>
            <person name="Lodhi M."/>
            <person name="Johnson A."/>
            <person name="Chen E."/>
            <person name="Marra M.A."/>
            <person name="Martienssen R."/>
            <person name="McCombie W.R."/>
        </authorList>
    </citation>
    <scope>NUCLEOTIDE SEQUENCE [LARGE SCALE GENOMIC DNA]</scope>
    <source>
        <strain>cv. Columbia</strain>
    </source>
</reference>
<reference key="4">
    <citation type="journal article" date="2017" name="Plant J.">
        <title>Araport11: a complete reannotation of the Arabidopsis thaliana reference genome.</title>
        <authorList>
            <person name="Cheng C.Y."/>
            <person name="Krishnakumar V."/>
            <person name="Chan A.P."/>
            <person name="Thibaud-Nissen F."/>
            <person name="Schobel S."/>
            <person name="Town C.D."/>
        </authorList>
    </citation>
    <scope>GENOME REANNOTATION</scope>
    <source>
        <strain>cv. Columbia</strain>
    </source>
</reference>
<reference key="5">
    <citation type="journal article" date="2003" name="Science">
        <title>Empirical analysis of transcriptional activity in the Arabidopsis genome.</title>
        <authorList>
            <person name="Yamada K."/>
            <person name="Lim J."/>
            <person name="Dale J.M."/>
            <person name="Chen H."/>
            <person name="Shinn P."/>
            <person name="Palm C.J."/>
            <person name="Southwick A.M."/>
            <person name="Wu H.C."/>
            <person name="Kim C.J."/>
            <person name="Nguyen M."/>
            <person name="Pham P.K."/>
            <person name="Cheuk R.F."/>
            <person name="Karlin-Newmann G."/>
            <person name="Liu S.X."/>
            <person name="Lam B."/>
            <person name="Sakano H."/>
            <person name="Wu T."/>
            <person name="Yu G."/>
            <person name="Miranda M."/>
            <person name="Quach H.L."/>
            <person name="Tripp M."/>
            <person name="Chang C.H."/>
            <person name="Lee J.M."/>
            <person name="Toriumi M.J."/>
            <person name="Chan M.M."/>
            <person name="Tang C.C."/>
            <person name="Onodera C.S."/>
            <person name="Deng J.M."/>
            <person name="Akiyama K."/>
            <person name="Ansari Y."/>
            <person name="Arakawa T."/>
            <person name="Banh J."/>
            <person name="Banno F."/>
            <person name="Bowser L."/>
            <person name="Brooks S.Y."/>
            <person name="Carninci P."/>
            <person name="Chao Q."/>
            <person name="Choy N."/>
            <person name="Enju A."/>
            <person name="Goldsmith A.D."/>
            <person name="Gurjal M."/>
            <person name="Hansen N.F."/>
            <person name="Hayashizaki Y."/>
            <person name="Johnson-Hopson C."/>
            <person name="Hsuan V.W."/>
            <person name="Iida K."/>
            <person name="Karnes M."/>
            <person name="Khan S."/>
            <person name="Koesema E."/>
            <person name="Ishida J."/>
            <person name="Jiang P.X."/>
            <person name="Jones T."/>
            <person name="Kawai J."/>
            <person name="Kamiya A."/>
            <person name="Meyers C."/>
            <person name="Nakajima M."/>
            <person name="Narusaka M."/>
            <person name="Seki M."/>
            <person name="Sakurai T."/>
            <person name="Satou M."/>
            <person name="Tamse R."/>
            <person name="Vaysberg M."/>
            <person name="Wallender E.K."/>
            <person name="Wong C."/>
            <person name="Yamamura Y."/>
            <person name="Yuan S."/>
            <person name="Shinozaki K."/>
            <person name="Davis R.W."/>
            <person name="Theologis A."/>
            <person name="Ecker J.R."/>
        </authorList>
    </citation>
    <scope>NUCLEOTIDE SEQUENCE [LARGE SCALE MRNA]</scope>
    <source>
        <strain>cv. Columbia</strain>
    </source>
</reference>
<reference key="6">
    <citation type="journal article" date="2011" name="Mol. Syst. Biol.">
        <title>Arabidopsis G-protein interactome reveals connections to cell wall carbohydrates and morphogenesis.</title>
        <authorList>
            <person name="Klopffleisch K."/>
            <person name="Phan N."/>
            <person name="Augustin K."/>
            <person name="Bayne R.S."/>
            <person name="Booker K.S."/>
            <person name="Botella J.R."/>
            <person name="Carpita N.C."/>
            <person name="Carr T."/>
            <person name="Chen J.G."/>
            <person name="Cooke T.R."/>
            <person name="Frick-Cheng A."/>
            <person name="Friedman E.J."/>
            <person name="Fulk B."/>
            <person name="Hahn M.G."/>
            <person name="Jiang K."/>
            <person name="Jorda L."/>
            <person name="Kruppe L."/>
            <person name="Liu C."/>
            <person name="Lorek J."/>
            <person name="McCann M.C."/>
            <person name="Molina A."/>
            <person name="Moriyama E.N."/>
            <person name="Mukhtar M.S."/>
            <person name="Mudgil Y."/>
            <person name="Pattathil S."/>
            <person name="Schwarz J."/>
            <person name="Seta S."/>
            <person name="Tan M."/>
            <person name="Temp U."/>
            <person name="Trusov Y."/>
            <person name="Urano D."/>
            <person name="Welter B."/>
            <person name="Yang J."/>
            <person name="Panstruga R."/>
            <person name="Uhrig J.F."/>
            <person name="Jones A.M."/>
        </authorList>
    </citation>
    <scope>INTERACTION WITH RGS1</scope>
</reference>
<name>SYP23_ARATH</name>
<sequence>MSFQDLEAGRGRSLASSRNINGGGSRQDTTQDVASGIFQINTSVSTFHRLVNTLGTPKDTPELREKLHKTRLYIGQLVKDTSAKLKEASETDHQRGVNQKKKIVDAKLAKDFQAVLKEFQKAQRLAAERETVYAPLVHKPSLPSSYTSSEIDVNGDKHPEQRALLVESKRQELVLLDNEIAFNEAVIEEREQGIQEIQQQIGEVHEIFKDLAVLVHDQGNMIDDIGTHIDNSYAATAQGKSHLVRHQRHKDQILL</sequence>
<feature type="initiator methionine" description="Removed" evidence="2">
    <location>
        <position position="1"/>
    </location>
</feature>
<feature type="chain" id="PRO_0000210255" description="Syntaxin-23">
    <location>
        <begin position="2"/>
        <end position="255"/>
    </location>
</feature>
<feature type="domain" description="t-SNARE coiled-coil homology" evidence="3">
    <location>
        <begin position="184"/>
        <end position="246"/>
    </location>
</feature>
<feature type="region of interest" description="Disordered" evidence="4">
    <location>
        <begin position="1"/>
        <end position="31"/>
    </location>
</feature>
<feature type="compositionally biased region" description="Polar residues" evidence="4">
    <location>
        <begin position="14"/>
        <end position="31"/>
    </location>
</feature>
<feature type="modified residue" description="N-acetylserine" evidence="2">
    <location>
        <position position="2"/>
    </location>
</feature>
<feature type="sequence variant" description="In strain: cv. RLD.">
    <original>RHQRHKDQILL</original>
    <variation>KASKTQRSNSSLTCLLLVIFGIVLMIVIIVLAV</variation>
    <location>
        <begin position="245"/>
        <end position="255"/>
    </location>
</feature>